<feature type="chain" id="PRO_1000071859" description="Large ribosomal subunit protein bL36">
    <location>
        <begin position="1"/>
        <end position="41"/>
    </location>
</feature>
<comment type="similarity">
    <text evidence="1">Belongs to the bacterial ribosomal protein bL36 family.</text>
</comment>
<reference key="1">
    <citation type="submission" date="2007-04" db="EMBL/GenBank/DDBJ databases">
        <title>Complete genome sequence of the nitrogen-fixing bacterium Azorhizobium caulinodans ORS571.</title>
        <authorList>
            <person name="Lee K.B."/>
            <person name="Backer P.D."/>
            <person name="Aono T."/>
            <person name="Liu C.T."/>
            <person name="Suzuki S."/>
            <person name="Suzuki T."/>
            <person name="Kaneko T."/>
            <person name="Yamada M."/>
            <person name="Tabata S."/>
            <person name="Kupfer D.M."/>
            <person name="Najar F.Z."/>
            <person name="Wiley G.B."/>
            <person name="Roe B."/>
            <person name="Binnewies T."/>
            <person name="Ussery D."/>
            <person name="Vereecke D."/>
            <person name="Gevers D."/>
            <person name="Holsters M."/>
            <person name="Oyaizu H."/>
        </authorList>
    </citation>
    <scope>NUCLEOTIDE SEQUENCE [LARGE SCALE GENOMIC DNA]</scope>
    <source>
        <strain>ATCC 43989 / DSM 5975 / JCM 20966 / LMG 6465 / NBRC 14845 / NCIMB 13405 / ORS 571</strain>
    </source>
</reference>
<organism>
    <name type="scientific">Azorhizobium caulinodans (strain ATCC 43989 / DSM 5975 / JCM 20966 / LMG 6465 / NBRC 14845 / NCIMB 13405 / ORS 571)</name>
    <dbReference type="NCBI Taxonomy" id="438753"/>
    <lineage>
        <taxon>Bacteria</taxon>
        <taxon>Pseudomonadati</taxon>
        <taxon>Pseudomonadota</taxon>
        <taxon>Alphaproteobacteria</taxon>
        <taxon>Hyphomicrobiales</taxon>
        <taxon>Xanthobacteraceae</taxon>
        <taxon>Azorhizobium</taxon>
    </lineage>
</organism>
<sequence length="41" mass="5023">MKIRNSLKSLLGRHRDNRLVRRKGRIYIINKTQKRYKARQG</sequence>
<keyword id="KW-1185">Reference proteome</keyword>
<keyword id="KW-0687">Ribonucleoprotein</keyword>
<keyword id="KW-0689">Ribosomal protein</keyword>
<evidence type="ECO:0000255" key="1">
    <source>
        <dbReference type="HAMAP-Rule" id="MF_00251"/>
    </source>
</evidence>
<evidence type="ECO:0000305" key="2"/>
<dbReference type="EMBL" id="AP009384">
    <property type="protein sequence ID" value="BAF86444.1"/>
    <property type="molecule type" value="Genomic_DNA"/>
</dbReference>
<dbReference type="SMR" id="A8ILY5"/>
<dbReference type="STRING" id="438753.AZC_0446"/>
<dbReference type="KEGG" id="azc:AZC_0446"/>
<dbReference type="eggNOG" id="COG0257">
    <property type="taxonomic scope" value="Bacteria"/>
</dbReference>
<dbReference type="HOGENOM" id="CLU_135723_3_0_5"/>
<dbReference type="Proteomes" id="UP000000270">
    <property type="component" value="Chromosome"/>
</dbReference>
<dbReference type="GO" id="GO:1990904">
    <property type="term" value="C:ribonucleoprotein complex"/>
    <property type="evidence" value="ECO:0007669"/>
    <property type="project" value="UniProtKB-KW"/>
</dbReference>
<dbReference type="GO" id="GO:0005840">
    <property type="term" value="C:ribosome"/>
    <property type="evidence" value="ECO:0007669"/>
    <property type="project" value="UniProtKB-KW"/>
</dbReference>
<dbReference type="GO" id="GO:0003735">
    <property type="term" value="F:structural constituent of ribosome"/>
    <property type="evidence" value="ECO:0007669"/>
    <property type="project" value="InterPro"/>
</dbReference>
<dbReference type="GO" id="GO:0006412">
    <property type="term" value="P:translation"/>
    <property type="evidence" value="ECO:0007669"/>
    <property type="project" value="UniProtKB-UniRule"/>
</dbReference>
<dbReference type="HAMAP" id="MF_00251">
    <property type="entry name" value="Ribosomal_bL36"/>
    <property type="match status" value="1"/>
</dbReference>
<dbReference type="InterPro" id="IPR000473">
    <property type="entry name" value="Ribosomal_bL36"/>
</dbReference>
<dbReference type="InterPro" id="IPR035977">
    <property type="entry name" value="Ribosomal_bL36_sp"/>
</dbReference>
<dbReference type="InterPro" id="IPR047621">
    <property type="entry name" value="Ribosomal_L36_bact"/>
</dbReference>
<dbReference type="NCBIfam" id="NF002021">
    <property type="entry name" value="PRK00831.1"/>
    <property type="match status" value="1"/>
</dbReference>
<dbReference type="NCBIfam" id="TIGR01022">
    <property type="entry name" value="rpmJ_bact"/>
    <property type="match status" value="1"/>
</dbReference>
<dbReference type="PANTHER" id="PTHR47781">
    <property type="entry name" value="50S RIBOSOMAL PROTEIN L36 2"/>
    <property type="match status" value="1"/>
</dbReference>
<dbReference type="PANTHER" id="PTHR47781:SF1">
    <property type="entry name" value="LARGE RIBOSOMAL SUBUNIT PROTEIN BL36B"/>
    <property type="match status" value="1"/>
</dbReference>
<dbReference type="Pfam" id="PF00444">
    <property type="entry name" value="Ribosomal_L36"/>
    <property type="match status" value="1"/>
</dbReference>
<dbReference type="SUPFAM" id="SSF57840">
    <property type="entry name" value="Ribosomal protein L36"/>
    <property type="match status" value="1"/>
</dbReference>
<protein>
    <recommendedName>
        <fullName evidence="1">Large ribosomal subunit protein bL36</fullName>
    </recommendedName>
    <alternativeName>
        <fullName evidence="2">50S ribosomal protein L36</fullName>
    </alternativeName>
</protein>
<proteinExistence type="inferred from homology"/>
<name>RL36_AZOC5</name>
<accession>A8ILY5</accession>
<gene>
    <name evidence="1" type="primary">rpmJ</name>
    <name type="ordered locus">AZC_0446</name>
</gene>